<feature type="signal peptide" evidence="2">
    <location>
        <begin position="1"/>
        <end position="19"/>
    </location>
</feature>
<feature type="chain" id="PRO_0000004147" description="Reticulocalbin-1">
    <location>
        <begin position="20"/>
        <end position="322"/>
    </location>
</feature>
<feature type="domain" description="EF-hand 1" evidence="3">
    <location>
        <begin position="70"/>
        <end position="105"/>
    </location>
</feature>
<feature type="domain" description="EF-hand 2" evidence="3">
    <location>
        <begin position="106"/>
        <end position="141"/>
    </location>
</feature>
<feature type="domain" description="EF-hand 3" evidence="3">
    <location>
        <begin position="157"/>
        <end position="192"/>
    </location>
</feature>
<feature type="domain" description="EF-hand 4" evidence="3">
    <location>
        <begin position="194"/>
        <end position="229"/>
    </location>
</feature>
<feature type="domain" description="EF-hand 5" evidence="3">
    <location>
        <begin position="235"/>
        <end position="270"/>
    </location>
</feature>
<feature type="domain" description="EF-hand 6" evidence="3">
    <location>
        <begin position="271"/>
        <end position="306"/>
    </location>
</feature>
<feature type="short sequence motif" description="Prevents secretion from ER" evidence="4">
    <location>
        <begin position="319"/>
        <end position="322"/>
    </location>
</feature>
<feature type="binding site" evidence="5">
    <location>
        <position position="83"/>
    </location>
    <ligand>
        <name>Ca(2+)</name>
        <dbReference type="ChEBI" id="CHEBI:29108"/>
        <label>1</label>
    </ligand>
</feature>
<feature type="binding site" evidence="5">
    <location>
        <position position="85"/>
    </location>
    <ligand>
        <name>Ca(2+)</name>
        <dbReference type="ChEBI" id="CHEBI:29108"/>
        <label>1</label>
    </ligand>
</feature>
<feature type="binding site" evidence="5">
    <location>
        <position position="87"/>
    </location>
    <ligand>
        <name>Ca(2+)</name>
        <dbReference type="ChEBI" id="CHEBI:29108"/>
        <label>1</label>
    </ligand>
</feature>
<feature type="binding site" evidence="5">
    <location>
        <position position="89"/>
    </location>
    <ligand>
        <name>Ca(2+)</name>
        <dbReference type="ChEBI" id="CHEBI:29108"/>
        <label>1</label>
    </ligand>
</feature>
<feature type="binding site" evidence="5">
    <location>
        <position position="94"/>
    </location>
    <ligand>
        <name>Ca(2+)</name>
        <dbReference type="ChEBI" id="CHEBI:29108"/>
        <label>1</label>
    </ligand>
</feature>
<feature type="binding site" evidence="3">
    <location>
        <position position="119"/>
    </location>
    <ligand>
        <name>Ca(2+)</name>
        <dbReference type="ChEBI" id="CHEBI:29108"/>
        <label>2</label>
    </ligand>
</feature>
<feature type="binding site" evidence="3">
    <location>
        <position position="121"/>
    </location>
    <ligand>
        <name>Ca(2+)</name>
        <dbReference type="ChEBI" id="CHEBI:29108"/>
        <label>2</label>
    </ligand>
</feature>
<feature type="binding site" evidence="3">
    <location>
        <position position="123"/>
    </location>
    <ligand>
        <name>Ca(2+)</name>
        <dbReference type="ChEBI" id="CHEBI:29108"/>
        <label>2</label>
    </ligand>
</feature>
<feature type="binding site" evidence="3">
    <location>
        <position position="125"/>
    </location>
    <ligand>
        <name>Ca(2+)</name>
        <dbReference type="ChEBI" id="CHEBI:29108"/>
        <label>2</label>
    </ligand>
</feature>
<feature type="binding site" evidence="3">
    <location>
        <position position="130"/>
    </location>
    <ligand>
        <name>Ca(2+)</name>
        <dbReference type="ChEBI" id="CHEBI:29108"/>
        <label>2</label>
    </ligand>
</feature>
<feature type="binding site" evidence="5">
    <location>
        <position position="170"/>
    </location>
    <ligand>
        <name>Ca(2+)</name>
        <dbReference type="ChEBI" id="CHEBI:29108"/>
        <label>3</label>
    </ligand>
</feature>
<feature type="binding site" evidence="5">
    <location>
        <position position="172"/>
    </location>
    <ligand>
        <name>Ca(2+)</name>
        <dbReference type="ChEBI" id="CHEBI:29108"/>
        <label>3</label>
    </ligand>
</feature>
<feature type="binding site" evidence="5">
    <location>
        <position position="174"/>
    </location>
    <ligand>
        <name>Ca(2+)</name>
        <dbReference type="ChEBI" id="CHEBI:29108"/>
        <label>3</label>
    </ligand>
</feature>
<feature type="binding site" evidence="5">
    <location>
        <position position="181"/>
    </location>
    <ligand>
        <name>Ca(2+)</name>
        <dbReference type="ChEBI" id="CHEBI:29108"/>
        <label>3</label>
    </ligand>
</feature>
<feature type="binding site" evidence="3">
    <location>
        <position position="207"/>
    </location>
    <ligand>
        <name>Ca(2+)</name>
        <dbReference type="ChEBI" id="CHEBI:29108"/>
        <label>4</label>
    </ligand>
</feature>
<feature type="binding site" evidence="3">
    <location>
        <position position="209"/>
    </location>
    <ligand>
        <name>Ca(2+)</name>
        <dbReference type="ChEBI" id="CHEBI:29108"/>
        <label>4</label>
    </ligand>
</feature>
<feature type="binding site" evidence="3">
    <location>
        <position position="211"/>
    </location>
    <ligand>
        <name>Ca(2+)</name>
        <dbReference type="ChEBI" id="CHEBI:29108"/>
        <label>4</label>
    </ligand>
</feature>
<feature type="binding site" evidence="3">
    <location>
        <position position="213"/>
    </location>
    <ligand>
        <name>Ca(2+)</name>
        <dbReference type="ChEBI" id="CHEBI:29108"/>
        <label>4</label>
    </ligand>
</feature>
<feature type="binding site" evidence="3">
    <location>
        <position position="218"/>
    </location>
    <ligand>
        <name>Ca(2+)</name>
        <dbReference type="ChEBI" id="CHEBI:29108"/>
        <label>4</label>
    </ligand>
</feature>
<feature type="binding site" evidence="3">
    <location>
        <position position="248"/>
    </location>
    <ligand>
        <name>Ca(2+)</name>
        <dbReference type="ChEBI" id="CHEBI:29108"/>
        <label>5</label>
    </ligand>
</feature>
<feature type="binding site" evidence="3">
    <location>
        <position position="250"/>
    </location>
    <ligand>
        <name>Ca(2+)</name>
        <dbReference type="ChEBI" id="CHEBI:29108"/>
        <label>5</label>
    </ligand>
</feature>
<feature type="binding site" evidence="3">
    <location>
        <position position="252"/>
    </location>
    <ligand>
        <name>Ca(2+)</name>
        <dbReference type="ChEBI" id="CHEBI:29108"/>
        <label>5</label>
    </ligand>
</feature>
<feature type="binding site" evidence="3">
    <location>
        <position position="254"/>
    </location>
    <ligand>
        <name>Ca(2+)</name>
        <dbReference type="ChEBI" id="CHEBI:29108"/>
        <label>5</label>
    </ligand>
</feature>
<feature type="binding site" evidence="3">
    <location>
        <position position="259"/>
    </location>
    <ligand>
        <name>Ca(2+)</name>
        <dbReference type="ChEBI" id="CHEBI:29108"/>
        <label>5</label>
    </ligand>
</feature>
<feature type="binding site" evidence="3">
    <location>
        <position position="284"/>
    </location>
    <ligand>
        <name>Ca(2+)</name>
        <dbReference type="ChEBI" id="CHEBI:29108"/>
        <label>6</label>
    </ligand>
</feature>
<feature type="binding site" evidence="3">
    <location>
        <position position="286"/>
    </location>
    <ligand>
        <name>Ca(2+)</name>
        <dbReference type="ChEBI" id="CHEBI:29108"/>
        <label>6</label>
    </ligand>
</feature>
<feature type="binding site" evidence="3">
    <location>
        <position position="288"/>
    </location>
    <ligand>
        <name>Ca(2+)</name>
        <dbReference type="ChEBI" id="CHEBI:29108"/>
        <label>6</label>
    </ligand>
</feature>
<feature type="binding site" evidence="3">
    <location>
        <position position="290"/>
    </location>
    <ligand>
        <name>Ca(2+)</name>
        <dbReference type="ChEBI" id="CHEBI:29108"/>
        <label>6</label>
    </ligand>
</feature>
<feature type="binding site" evidence="3">
    <location>
        <position position="295"/>
    </location>
    <ligand>
        <name>Ca(2+)</name>
        <dbReference type="ChEBI" id="CHEBI:29108"/>
        <label>6</label>
    </ligand>
</feature>
<feature type="glycosylation site" description="N-linked (GlcNAc...) asparagine" evidence="2">
    <location>
        <position position="44"/>
    </location>
</feature>
<reference key="1">
    <citation type="journal article" date="1998" name="Proc. Natl. Acad. Sci. U.S.A.">
        <title>Complete sequencing of the Fugu WAGR region from WT1 to PAX6: dramatic compaction and conservation of synteny with human chromosome 11p13.</title>
        <authorList>
            <person name="Miles C."/>
            <person name="Elgar G."/>
            <person name="Coles E."/>
            <person name="Kleinjan D.J."/>
            <person name="Van Heyningen V."/>
            <person name="Hastie N."/>
        </authorList>
    </citation>
    <scope>NUCLEOTIDE SEQUENCE [GENOMIC DNA]</scope>
</reference>
<proteinExistence type="inferred from homology"/>
<dbReference type="EMBL" id="AL021531">
    <property type="protein sequence ID" value="CAA16492.1"/>
    <property type="molecule type" value="Genomic_DNA"/>
</dbReference>
<dbReference type="SMR" id="O93434"/>
<dbReference type="FunCoup" id="O93434">
    <property type="interactions" value="1116"/>
</dbReference>
<dbReference type="STRING" id="31033.ENSTRUP00000016600"/>
<dbReference type="GlyCosmos" id="O93434">
    <property type="glycosylation" value="1 site, No reported glycans"/>
</dbReference>
<dbReference type="eggNOG" id="KOG4223">
    <property type="taxonomic scope" value="Eukaryota"/>
</dbReference>
<dbReference type="InParanoid" id="O93434"/>
<dbReference type="Proteomes" id="UP000005226">
    <property type="component" value="Unplaced"/>
</dbReference>
<dbReference type="GO" id="GO:0005788">
    <property type="term" value="C:endoplasmic reticulum lumen"/>
    <property type="evidence" value="ECO:0007669"/>
    <property type="project" value="UniProtKB-SubCell"/>
</dbReference>
<dbReference type="GO" id="GO:0005509">
    <property type="term" value="F:calcium ion binding"/>
    <property type="evidence" value="ECO:0007669"/>
    <property type="project" value="InterPro"/>
</dbReference>
<dbReference type="CDD" id="cd16229">
    <property type="entry name" value="EFh_CREC_RCN1"/>
    <property type="match status" value="1"/>
</dbReference>
<dbReference type="FunFam" id="1.10.238.10:FF:000109">
    <property type="entry name" value="calumenin isoform X2"/>
    <property type="match status" value="1"/>
</dbReference>
<dbReference type="FunFam" id="1.10.238.10:FF:000110">
    <property type="entry name" value="calumenin isoform X2"/>
    <property type="match status" value="1"/>
</dbReference>
<dbReference type="FunFam" id="1.10.238.10:FF:000213">
    <property type="entry name" value="Reticulocalbin 1"/>
    <property type="match status" value="1"/>
</dbReference>
<dbReference type="Gene3D" id="1.10.238.10">
    <property type="entry name" value="EF-hand"/>
    <property type="match status" value="3"/>
</dbReference>
<dbReference type="InterPro" id="IPR011992">
    <property type="entry name" value="EF-hand-dom_pair"/>
</dbReference>
<dbReference type="InterPro" id="IPR018247">
    <property type="entry name" value="EF_Hand_1_Ca_BS"/>
</dbReference>
<dbReference type="InterPro" id="IPR002048">
    <property type="entry name" value="EF_hand_dom"/>
</dbReference>
<dbReference type="InterPro" id="IPR027241">
    <property type="entry name" value="Rcn1"/>
</dbReference>
<dbReference type="PANTHER" id="PTHR10827">
    <property type="entry name" value="RETICULOCALBIN"/>
    <property type="match status" value="1"/>
</dbReference>
<dbReference type="PANTHER" id="PTHR10827:SF17">
    <property type="entry name" value="RETICULOCALBIN-1"/>
    <property type="match status" value="1"/>
</dbReference>
<dbReference type="Pfam" id="PF13499">
    <property type="entry name" value="EF-hand_7"/>
    <property type="match status" value="2"/>
</dbReference>
<dbReference type="SMART" id="SM00054">
    <property type="entry name" value="EFh"/>
    <property type="match status" value="4"/>
</dbReference>
<dbReference type="SUPFAM" id="SSF47473">
    <property type="entry name" value="EF-hand"/>
    <property type="match status" value="2"/>
</dbReference>
<dbReference type="PROSITE" id="PS00018">
    <property type="entry name" value="EF_HAND_1"/>
    <property type="match status" value="4"/>
</dbReference>
<dbReference type="PROSITE" id="PS50222">
    <property type="entry name" value="EF_HAND_2"/>
    <property type="match status" value="6"/>
</dbReference>
<dbReference type="PROSITE" id="PS00014">
    <property type="entry name" value="ER_TARGET"/>
    <property type="match status" value="1"/>
</dbReference>
<protein>
    <recommendedName>
        <fullName>Reticulocalbin-1</fullName>
    </recommendedName>
</protein>
<organism>
    <name type="scientific">Takifugu rubripes</name>
    <name type="common">Japanese pufferfish</name>
    <name type="synonym">Fugu rubripes</name>
    <dbReference type="NCBI Taxonomy" id="31033"/>
    <lineage>
        <taxon>Eukaryota</taxon>
        <taxon>Metazoa</taxon>
        <taxon>Chordata</taxon>
        <taxon>Craniata</taxon>
        <taxon>Vertebrata</taxon>
        <taxon>Euteleostomi</taxon>
        <taxon>Actinopterygii</taxon>
        <taxon>Neopterygii</taxon>
        <taxon>Teleostei</taxon>
        <taxon>Neoteleostei</taxon>
        <taxon>Acanthomorphata</taxon>
        <taxon>Eupercaria</taxon>
        <taxon>Tetraodontiformes</taxon>
        <taxon>Tetradontoidea</taxon>
        <taxon>Tetraodontidae</taxon>
        <taxon>Takifugu</taxon>
    </lineage>
</organism>
<evidence type="ECO:0000250" key="1"/>
<evidence type="ECO:0000255" key="2"/>
<evidence type="ECO:0000255" key="3">
    <source>
        <dbReference type="PROSITE-ProRule" id="PRU00448"/>
    </source>
</evidence>
<evidence type="ECO:0000255" key="4">
    <source>
        <dbReference type="PROSITE-ProRule" id="PRU10138"/>
    </source>
</evidence>
<evidence type="ECO:0000305" key="5"/>
<sequence>MDVLGFICAVFLGTVVLHAKPTVRKDRVLYQDPELLRQATNEDNNSFQYDHEVFLGKEESKTFDQLSPEESKDRLSKIVDRIDGDGNSYITTDELKAWIKRVQKRYVYENVVKVWADYDLNKDNKISWEEYKQATYGYYLSNPEEFDETTDQFSFKKMLPRDERRFKRADLDGDSAANREEFTSFLHPEEFEHMKDIVVLETLEDIDKNSDGHVDEDEYIADMFAHEDRGPEPEWVKTEREQFSDFRDLNKDGKMDLDEIRHWIMPQDYDHAQAEARHLVYESDKDKDQMLTKEEILDNWNMFVGSQATNYGEDLTRNHDEL</sequence>
<accession>O93434</accession>
<comment type="function">
    <text evidence="1">May regulate calcium-dependent activities in the endoplasmic reticulum lumen or post-ER compartment.</text>
</comment>
<comment type="subcellular location">
    <subcellularLocation>
        <location evidence="4">Endoplasmic reticulum lumen</location>
    </subcellularLocation>
</comment>
<comment type="similarity">
    <text evidence="5">Belongs to the CREC family.</text>
</comment>
<name>RCN1_TAKRU</name>
<gene>
    <name type="primary">rcn1</name>
</gene>
<keyword id="KW-0106">Calcium</keyword>
<keyword id="KW-0256">Endoplasmic reticulum</keyword>
<keyword id="KW-0325">Glycoprotein</keyword>
<keyword id="KW-0479">Metal-binding</keyword>
<keyword id="KW-1185">Reference proteome</keyword>
<keyword id="KW-0677">Repeat</keyword>
<keyword id="KW-0732">Signal</keyword>